<accession>Q58126</accession>
<organism>
    <name type="scientific">Methanocaldococcus jannaschii (strain ATCC 43067 / DSM 2661 / JAL-1 / JCM 10045 / NBRC 100440)</name>
    <name type="common">Methanococcus jannaschii</name>
    <dbReference type="NCBI Taxonomy" id="243232"/>
    <lineage>
        <taxon>Archaea</taxon>
        <taxon>Methanobacteriati</taxon>
        <taxon>Methanobacteriota</taxon>
        <taxon>Methanomada group</taxon>
        <taxon>Methanococci</taxon>
        <taxon>Methanococcales</taxon>
        <taxon>Methanocaldococcaceae</taxon>
        <taxon>Methanocaldococcus</taxon>
    </lineage>
</organism>
<keyword id="KW-1185">Reference proteome</keyword>
<protein>
    <recommendedName>
        <fullName>Uncharacterized protein MJ0716</fullName>
    </recommendedName>
</protein>
<dbReference type="EMBL" id="L77117">
    <property type="protein sequence ID" value="AAB98715.1"/>
    <property type="molecule type" value="Genomic_DNA"/>
</dbReference>
<dbReference type="PIR" id="D64389">
    <property type="entry name" value="D64389"/>
</dbReference>
<dbReference type="SMR" id="Q58126"/>
<dbReference type="STRING" id="243232.MJ_0716"/>
<dbReference type="PaxDb" id="243232-MJ_0716"/>
<dbReference type="EnsemblBacteria" id="AAB98715">
    <property type="protein sequence ID" value="AAB98715"/>
    <property type="gene ID" value="MJ_0716"/>
</dbReference>
<dbReference type="KEGG" id="mja:MJ_0716"/>
<dbReference type="eggNOG" id="arCOG01688">
    <property type="taxonomic scope" value="Archaea"/>
</dbReference>
<dbReference type="HOGENOM" id="CLU_2366210_0_0_2"/>
<dbReference type="InParanoid" id="Q58126"/>
<dbReference type="Proteomes" id="UP000000805">
    <property type="component" value="Chromosome"/>
</dbReference>
<dbReference type="Gene3D" id="3.30.1380.20">
    <property type="entry name" value="Trafficking protein particle complex subunit 3"/>
    <property type="match status" value="1"/>
</dbReference>
<dbReference type="InterPro" id="IPR024096">
    <property type="entry name" value="NO_sig/Golgi_transp_ligand-bd"/>
</dbReference>
<dbReference type="PANTHER" id="PTHR35090:SF2">
    <property type="entry name" value="ARSR FAMILY TRANSCRIPTIONAL REGULATOR"/>
    <property type="match status" value="1"/>
</dbReference>
<dbReference type="PANTHER" id="PTHR35090">
    <property type="entry name" value="DNA-DIRECTED RNA POLYMERASE SUBUNIT I"/>
    <property type="match status" value="1"/>
</dbReference>
<dbReference type="SUPFAM" id="SSF111126">
    <property type="entry name" value="Ligand-binding domain in the NO signalling and Golgi transport"/>
    <property type="match status" value="1"/>
</dbReference>
<feature type="chain" id="PRO_0000107001" description="Uncharacterized protein MJ0716">
    <location>
        <begin position="1"/>
        <end position="95"/>
    </location>
</feature>
<name>Y716_METJA</name>
<gene>
    <name type="ordered locus">MJ0716</name>
</gene>
<reference key="1">
    <citation type="journal article" date="1996" name="Science">
        <title>Complete genome sequence of the methanogenic archaeon, Methanococcus jannaschii.</title>
        <authorList>
            <person name="Bult C.J."/>
            <person name="White O."/>
            <person name="Olsen G.J."/>
            <person name="Zhou L."/>
            <person name="Fleischmann R.D."/>
            <person name="Sutton G.G."/>
            <person name="Blake J.A."/>
            <person name="FitzGerald L.M."/>
            <person name="Clayton R.A."/>
            <person name="Gocayne J.D."/>
            <person name="Kerlavage A.R."/>
            <person name="Dougherty B.A."/>
            <person name="Tomb J.-F."/>
            <person name="Adams M.D."/>
            <person name="Reich C.I."/>
            <person name="Overbeek R."/>
            <person name="Kirkness E.F."/>
            <person name="Weinstock K.G."/>
            <person name="Merrick J.M."/>
            <person name="Glodek A."/>
            <person name="Scott J.L."/>
            <person name="Geoghagen N.S.M."/>
            <person name="Weidman J.F."/>
            <person name="Fuhrmann J.L."/>
            <person name="Nguyen D."/>
            <person name="Utterback T.R."/>
            <person name="Kelley J.M."/>
            <person name="Peterson J.D."/>
            <person name="Sadow P.W."/>
            <person name="Hanna M.C."/>
            <person name="Cotton M.D."/>
            <person name="Roberts K.M."/>
            <person name="Hurst M.A."/>
            <person name="Kaine B.P."/>
            <person name="Borodovsky M."/>
            <person name="Klenk H.-P."/>
            <person name="Fraser C.M."/>
            <person name="Smith H.O."/>
            <person name="Woese C.R."/>
            <person name="Venter J.C."/>
        </authorList>
    </citation>
    <scope>NUCLEOTIDE SEQUENCE [LARGE SCALE GENOMIC DNA]</scope>
    <source>
        <strain>ATCC 43067 / DSM 2661 / JAL-1 / JCM 10045 / NBRC 100440</strain>
    </source>
</reference>
<proteinExistence type="predicted"/>
<sequence>MEFYNIGDIMALKFTIEELSNQKRDTLGRNIDVTVFRLIRFMDLERYLGRGAHGVIYECGRELGLALNPKTVEDVVKFCEEYKIGKVEIVNKEPL</sequence>